<name>ENGB_STRPN</name>
<gene>
    <name evidence="1" type="primary">engB</name>
    <name type="ordered locus">SP_1568</name>
</gene>
<evidence type="ECO:0000255" key="1">
    <source>
        <dbReference type="HAMAP-Rule" id="MF_00321"/>
    </source>
</evidence>
<proteinExistence type="inferred from homology"/>
<keyword id="KW-0131">Cell cycle</keyword>
<keyword id="KW-0132">Cell division</keyword>
<keyword id="KW-0342">GTP-binding</keyword>
<keyword id="KW-0460">Magnesium</keyword>
<keyword id="KW-0479">Metal-binding</keyword>
<keyword id="KW-0547">Nucleotide-binding</keyword>
<keyword id="KW-1185">Reference proteome</keyword>
<keyword id="KW-0717">Septation</keyword>
<comment type="function">
    <text evidence="1">Necessary for normal cell division and for the maintenance of normal septation.</text>
</comment>
<comment type="cofactor">
    <cofactor evidence="1">
        <name>Mg(2+)</name>
        <dbReference type="ChEBI" id="CHEBI:18420"/>
    </cofactor>
</comment>
<comment type="similarity">
    <text evidence="1">Belongs to the TRAFAC class TrmE-Era-EngA-EngB-Septin-like GTPase superfamily. EngB GTPase family.</text>
</comment>
<reference key="1">
    <citation type="journal article" date="2001" name="Science">
        <title>Complete genome sequence of a virulent isolate of Streptococcus pneumoniae.</title>
        <authorList>
            <person name="Tettelin H."/>
            <person name="Nelson K.E."/>
            <person name="Paulsen I.T."/>
            <person name="Eisen J.A."/>
            <person name="Read T.D."/>
            <person name="Peterson S.N."/>
            <person name="Heidelberg J.F."/>
            <person name="DeBoy R.T."/>
            <person name="Haft D.H."/>
            <person name="Dodson R.J."/>
            <person name="Durkin A.S."/>
            <person name="Gwinn M.L."/>
            <person name="Kolonay J.F."/>
            <person name="Nelson W.C."/>
            <person name="Peterson J.D."/>
            <person name="Umayam L.A."/>
            <person name="White O."/>
            <person name="Salzberg S.L."/>
            <person name="Lewis M.R."/>
            <person name="Radune D."/>
            <person name="Holtzapple E.K."/>
            <person name="Khouri H.M."/>
            <person name="Wolf A.M."/>
            <person name="Utterback T.R."/>
            <person name="Hansen C.L."/>
            <person name="McDonald L.A."/>
            <person name="Feldblyum T.V."/>
            <person name="Angiuoli S.V."/>
            <person name="Dickinson T."/>
            <person name="Hickey E.K."/>
            <person name="Holt I.E."/>
            <person name="Loftus B.J."/>
            <person name="Yang F."/>
            <person name="Smith H.O."/>
            <person name="Venter J.C."/>
            <person name="Dougherty B.A."/>
            <person name="Morrison D.A."/>
            <person name="Hollingshead S.K."/>
            <person name="Fraser C.M."/>
        </authorList>
    </citation>
    <scope>NUCLEOTIDE SEQUENCE [LARGE SCALE GENOMIC DNA]</scope>
    <source>
        <strain>ATCC BAA-334 / TIGR4</strain>
    </source>
</reference>
<accession>P64072</accession>
<accession>Q97PN5</accession>
<dbReference type="EMBL" id="AE005672">
    <property type="protein sequence ID" value="AAK75655.1"/>
    <property type="molecule type" value="Genomic_DNA"/>
</dbReference>
<dbReference type="PIR" id="F95182">
    <property type="entry name" value="F95182"/>
</dbReference>
<dbReference type="SMR" id="P64072"/>
<dbReference type="PaxDb" id="170187-SP_1568"/>
<dbReference type="EnsemblBacteria" id="AAK75655">
    <property type="protein sequence ID" value="AAK75655"/>
    <property type="gene ID" value="SP_1568"/>
</dbReference>
<dbReference type="KEGG" id="spn:SP_1568"/>
<dbReference type="eggNOG" id="COG0218">
    <property type="taxonomic scope" value="Bacteria"/>
</dbReference>
<dbReference type="PhylomeDB" id="P64072"/>
<dbReference type="Proteomes" id="UP000000585">
    <property type="component" value="Chromosome"/>
</dbReference>
<dbReference type="GO" id="GO:0005829">
    <property type="term" value="C:cytosol"/>
    <property type="evidence" value="ECO:0007669"/>
    <property type="project" value="TreeGrafter"/>
</dbReference>
<dbReference type="GO" id="GO:0005525">
    <property type="term" value="F:GTP binding"/>
    <property type="evidence" value="ECO:0007669"/>
    <property type="project" value="UniProtKB-UniRule"/>
</dbReference>
<dbReference type="GO" id="GO:0046872">
    <property type="term" value="F:metal ion binding"/>
    <property type="evidence" value="ECO:0007669"/>
    <property type="project" value="UniProtKB-KW"/>
</dbReference>
<dbReference type="GO" id="GO:0000917">
    <property type="term" value="P:division septum assembly"/>
    <property type="evidence" value="ECO:0007669"/>
    <property type="project" value="UniProtKB-KW"/>
</dbReference>
<dbReference type="CDD" id="cd01876">
    <property type="entry name" value="YihA_EngB"/>
    <property type="match status" value="1"/>
</dbReference>
<dbReference type="FunFam" id="3.40.50.300:FF:000098">
    <property type="entry name" value="Probable GTP-binding protein EngB"/>
    <property type="match status" value="1"/>
</dbReference>
<dbReference type="Gene3D" id="3.40.50.300">
    <property type="entry name" value="P-loop containing nucleotide triphosphate hydrolases"/>
    <property type="match status" value="1"/>
</dbReference>
<dbReference type="HAMAP" id="MF_00321">
    <property type="entry name" value="GTPase_EngB"/>
    <property type="match status" value="1"/>
</dbReference>
<dbReference type="InterPro" id="IPR030393">
    <property type="entry name" value="G_ENGB_dom"/>
</dbReference>
<dbReference type="InterPro" id="IPR006073">
    <property type="entry name" value="GTP-bd"/>
</dbReference>
<dbReference type="InterPro" id="IPR019987">
    <property type="entry name" value="GTP-bd_ribosome_bio_YsxC"/>
</dbReference>
<dbReference type="InterPro" id="IPR027417">
    <property type="entry name" value="P-loop_NTPase"/>
</dbReference>
<dbReference type="NCBIfam" id="TIGR03598">
    <property type="entry name" value="GTPase_YsxC"/>
    <property type="match status" value="1"/>
</dbReference>
<dbReference type="PANTHER" id="PTHR11649:SF13">
    <property type="entry name" value="ENGB-TYPE G DOMAIN-CONTAINING PROTEIN"/>
    <property type="match status" value="1"/>
</dbReference>
<dbReference type="PANTHER" id="PTHR11649">
    <property type="entry name" value="MSS1/TRME-RELATED GTP-BINDING PROTEIN"/>
    <property type="match status" value="1"/>
</dbReference>
<dbReference type="Pfam" id="PF01926">
    <property type="entry name" value="MMR_HSR1"/>
    <property type="match status" value="1"/>
</dbReference>
<dbReference type="PRINTS" id="PR00449">
    <property type="entry name" value="RASTRNSFRMNG"/>
</dbReference>
<dbReference type="SUPFAM" id="SSF52540">
    <property type="entry name" value="P-loop containing nucleoside triphosphate hydrolases"/>
    <property type="match status" value="1"/>
</dbReference>
<dbReference type="PROSITE" id="PS51706">
    <property type="entry name" value="G_ENGB"/>
    <property type="match status" value="1"/>
</dbReference>
<protein>
    <recommendedName>
        <fullName evidence="1">Probable GTP-binding protein EngB</fullName>
    </recommendedName>
</protein>
<sequence length="195" mass="22273">MELNTHNAEILLSAANKSHYPQDELPEIALAGRSNVGKSSFINTMLNRKNLARTSGKPGKTQLLNFFNIDDKMRFVDVPGYGYARVSKKEREKWGCMIEEYLTTRENLRAVVSLVDLRHDPSADDVQMYEFLKYYEIPVIIVATKADKIPRGKWNKHESAIKKKLNFDPSDDFILFSSVSKAGMDEAWDAILEKL</sequence>
<organism>
    <name type="scientific">Streptococcus pneumoniae serotype 4 (strain ATCC BAA-334 / TIGR4)</name>
    <dbReference type="NCBI Taxonomy" id="170187"/>
    <lineage>
        <taxon>Bacteria</taxon>
        <taxon>Bacillati</taxon>
        <taxon>Bacillota</taxon>
        <taxon>Bacilli</taxon>
        <taxon>Lactobacillales</taxon>
        <taxon>Streptococcaceae</taxon>
        <taxon>Streptococcus</taxon>
    </lineage>
</organism>
<feature type="chain" id="PRO_0000157788" description="Probable GTP-binding protein EngB">
    <location>
        <begin position="1"/>
        <end position="195"/>
    </location>
</feature>
<feature type="domain" description="EngB-type G" evidence="1">
    <location>
        <begin position="24"/>
        <end position="195"/>
    </location>
</feature>
<feature type="binding site" evidence="1">
    <location>
        <begin position="32"/>
        <end position="39"/>
    </location>
    <ligand>
        <name>GTP</name>
        <dbReference type="ChEBI" id="CHEBI:37565"/>
    </ligand>
</feature>
<feature type="binding site" evidence="1">
    <location>
        <position position="39"/>
    </location>
    <ligand>
        <name>Mg(2+)</name>
        <dbReference type="ChEBI" id="CHEBI:18420"/>
    </ligand>
</feature>
<feature type="binding site" evidence="1">
    <location>
        <begin position="59"/>
        <end position="63"/>
    </location>
    <ligand>
        <name>GTP</name>
        <dbReference type="ChEBI" id="CHEBI:37565"/>
    </ligand>
</feature>
<feature type="binding site" evidence="1">
    <location>
        <position position="61"/>
    </location>
    <ligand>
        <name>Mg(2+)</name>
        <dbReference type="ChEBI" id="CHEBI:18420"/>
    </ligand>
</feature>
<feature type="binding site" evidence="1">
    <location>
        <begin position="77"/>
        <end position="80"/>
    </location>
    <ligand>
        <name>GTP</name>
        <dbReference type="ChEBI" id="CHEBI:37565"/>
    </ligand>
</feature>
<feature type="binding site" evidence="1">
    <location>
        <begin position="144"/>
        <end position="147"/>
    </location>
    <ligand>
        <name>GTP</name>
        <dbReference type="ChEBI" id="CHEBI:37565"/>
    </ligand>
</feature>
<feature type="binding site" evidence="1">
    <location>
        <begin position="176"/>
        <end position="178"/>
    </location>
    <ligand>
        <name>GTP</name>
        <dbReference type="ChEBI" id="CHEBI:37565"/>
    </ligand>
</feature>